<gene>
    <name evidence="1" type="primary">xylA</name>
    <name type="ordered locus">ECH74115_4941</name>
</gene>
<name>XYLA_ECO5E</name>
<organism>
    <name type="scientific">Escherichia coli O157:H7 (strain EC4115 / EHEC)</name>
    <dbReference type="NCBI Taxonomy" id="444450"/>
    <lineage>
        <taxon>Bacteria</taxon>
        <taxon>Pseudomonadati</taxon>
        <taxon>Pseudomonadota</taxon>
        <taxon>Gammaproteobacteria</taxon>
        <taxon>Enterobacterales</taxon>
        <taxon>Enterobacteriaceae</taxon>
        <taxon>Escherichia</taxon>
    </lineage>
</organism>
<dbReference type="EC" id="5.3.1.5" evidence="1"/>
<dbReference type="EMBL" id="CP001164">
    <property type="protein sequence ID" value="ACI39512.1"/>
    <property type="molecule type" value="Genomic_DNA"/>
</dbReference>
<dbReference type="RefSeq" id="WP_001149589.1">
    <property type="nucleotide sequence ID" value="NC_011353.1"/>
</dbReference>
<dbReference type="SMR" id="B5YVL8"/>
<dbReference type="KEGG" id="ecf:ECH74115_4941"/>
<dbReference type="HOGENOM" id="CLU_037261_1_0_6"/>
<dbReference type="GO" id="GO:0005737">
    <property type="term" value="C:cytoplasm"/>
    <property type="evidence" value="ECO:0007669"/>
    <property type="project" value="UniProtKB-SubCell"/>
</dbReference>
<dbReference type="GO" id="GO:0000287">
    <property type="term" value="F:magnesium ion binding"/>
    <property type="evidence" value="ECO:0007669"/>
    <property type="project" value="UniProtKB-UniRule"/>
</dbReference>
<dbReference type="GO" id="GO:0009045">
    <property type="term" value="F:xylose isomerase activity"/>
    <property type="evidence" value="ECO:0007669"/>
    <property type="project" value="UniProtKB-UniRule"/>
</dbReference>
<dbReference type="GO" id="GO:0042732">
    <property type="term" value="P:D-xylose metabolic process"/>
    <property type="evidence" value="ECO:0007669"/>
    <property type="project" value="UniProtKB-UniRule"/>
</dbReference>
<dbReference type="FunFam" id="3.20.20.150:FF:000002">
    <property type="entry name" value="Xylose isomerase"/>
    <property type="match status" value="1"/>
</dbReference>
<dbReference type="Gene3D" id="3.20.20.150">
    <property type="entry name" value="Divalent-metal-dependent TIM barrel enzymes"/>
    <property type="match status" value="1"/>
</dbReference>
<dbReference type="HAMAP" id="MF_00455">
    <property type="entry name" value="Xylose_isom_A"/>
    <property type="match status" value="1"/>
</dbReference>
<dbReference type="InterPro" id="IPR036237">
    <property type="entry name" value="Xyl_isomerase-like_sf"/>
</dbReference>
<dbReference type="InterPro" id="IPR013452">
    <property type="entry name" value="Xylose_isom_bac"/>
</dbReference>
<dbReference type="InterPro" id="IPR001998">
    <property type="entry name" value="Xylose_isomerase"/>
</dbReference>
<dbReference type="NCBIfam" id="NF003998">
    <property type="entry name" value="PRK05474.1"/>
    <property type="match status" value="1"/>
</dbReference>
<dbReference type="NCBIfam" id="TIGR02630">
    <property type="entry name" value="xylose_isom_A"/>
    <property type="match status" value="1"/>
</dbReference>
<dbReference type="PANTHER" id="PTHR48408">
    <property type="match status" value="1"/>
</dbReference>
<dbReference type="PANTHER" id="PTHR48408:SF1">
    <property type="entry name" value="XYLOSE ISOMERASE"/>
    <property type="match status" value="1"/>
</dbReference>
<dbReference type="PRINTS" id="PR00688">
    <property type="entry name" value="XYLOSISMRASE"/>
</dbReference>
<dbReference type="SUPFAM" id="SSF51658">
    <property type="entry name" value="Xylose isomerase-like"/>
    <property type="match status" value="1"/>
</dbReference>
<dbReference type="PROSITE" id="PS51415">
    <property type="entry name" value="XYLOSE_ISOMERASE"/>
    <property type="match status" value="1"/>
</dbReference>
<reference key="1">
    <citation type="journal article" date="2011" name="Proc. Natl. Acad. Sci. U.S.A.">
        <title>Genomic anatomy of Escherichia coli O157:H7 outbreaks.</title>
        <authorList>
            <person name="Eppinger M."/>
            <person name="Mammel M.K."/>
            <person name="Leclerc J.E."/>
            <person name="Ravel J."/>
            <person name="Cebula T.A."/>
        </authorList>
    </citation>
    <scope>NUCLEOTIDE SEQUENCE [LARGE SCALE GENOMIC DNA]</scope>
    <source>
        <strain>EC4115 / EHEC</strain>
    </source>
</reference>
<comment type="catalytic activity">
    <reaction evidence="1">
        <text>alpha-D-xylose = alpha-D-xylulofuranose</text>
        <dbReference type="Rhea" id="RHEA:22816"/>
        <dbReference type="ChEBI" id="CHEBI:28518"/>
        <dbReference type="ChEBI" id="CHEBI:188998"/>
        <dbReference type="EC" id="5.3.1.5"/>
    </reaction>
</comment>
<comment type="cofactor">
    <cofactor evidence="1">
        <name>Mg(2+)</name>
        <dbReference type="ChEBI" id="CHEBI:18420"/>
    </cofactor>
    <text evidence="1">Binds 2 magnesium ions per subunit.</text>
</comment>
<comment type="subunit">
    <text evidence="1">Homotetramer.</text>
</comment>
<comment type="subcellular location">
    <subcellularLocation>
        <location evidence="1">Cytoplasm</location>
    </subcellularLocation>
</comment>
<comment type="similarity">
    <text evidence="1">Belongs to the xylose isomerase family.</text>
</comment>
<proteinExistence type="inferred from homology"/>
<feature type="chain" id="PRO_1000200292" description="Xylose isomerase">
    <location>
        <begin position="1"/>
        <end position="440"/>
    </location>
</feature>
<feature type="active site" evidence="1">
    <location>
        <position position="101"/>
    </location>
</feature>
<feature type="active site" evidence="1">
    <location>
        <position position="104"/>
    </location>
</feature>
<feature type="binding site" evidence="1">
    <location>
        <position position="232"/>
    </location>
    <ligand>
        <name>Mg(2+)</name>
        <dbReference type="ChEBI" id="CHEBI:18420"/>
        <label>1</label>
    </ligand>
</feature>
<feature type="binding site" evidence="1">
    <location>
        <position position="268"/>
    </location>
    <ligand>
        <name>Mg(2+)</name>
        <dbReference type="ChEBI" id="CHEBI:18420"/>
        <label>1</label>
    </ligand>
</feature>
<feature type="binding site" evidence="1">
    <location>
        <position position="268"/>
    </location>
    <ligand>
        <name>Mg(2+)</name>
        <dbReference type="ChEBI" id="CHEBI:18420"/>
        <label>2</label>
    </ligand>
</feature>
<feature type="binding site" evidence="1">
    <location>
        <position position="271"/>
    </location>
    <ligand>
        <name>Mg(2+)</name>
        <dbReference type="ChEBI" id="CHEBI:18420"/>
        <label>2</label>
    </ligand>
</feature>
<feature type="binding site" evidence="1">
    <location>
        <position position="296"/>
    </location>
    <ligand>
        <name>Mg(2+)</name>
        <dbReference type="ChEBI" id="CHEBI:18420"/>
        <label>1</label>
    </ligand>
</feature>
<feature type="binding site" evidence="1">
    <location>
        <position position="307"/>
    </location>
    <ligand>
        <name>Mg(2+)</name>
        <dbReference type="ChEBI" id="CHEBI:18420"/>
        <label>2</label>
    </ligand>
</feature>
<feature type="binding site" evidence="1">
    <location>
        <position position="309"/>
    </location>
    <ligand>
        <name>Mg(2+)</name>
        <dbReference type="ChEBI" id="CHEBI:18420"/>
        <label>2</label>
    </ligand>
</feature>
<feature type="binding site" evidence="1">
    <location>
        <position position="339"/>
    </location>
    <ligand>
        <name>Mg(2+)</name>
        <dbReference type="ChEBI" id="CHEBI:18420"/>
        <label>1</label>
    </ligand>
</feature>
<protein>
    <recommendedName>
        <fullName evidence="1">Xylose isomerase</fullName>
        <ecNumber evidence="1">5.3.1.5</ecNumber>
    </recommendedName>
</protein>
<accession>B5YVL8</accession>
<evidence type="ECO:0000255" key="1">
    <source>
        <dbReference type="HAMAP-Rule" id="MF_00455"/>
    </source>
</evidence>
<keyword id="KW-0119">Carbohydrate metabolism</keyword>
<keyword id="KW-0963">Cytoplasm</keyword>
<keyword id="KW-0413">Isomerase</keyword>
<keyword id="KW-0460">Magnesium</keyword>
<keyword id="KW-0479">Metal-binding</keyword>
<keyword id="KW-0859">Xylose metabolism</keyword>
<sequence length="440" mass="49666">MQAYFDQLDRVRYEGSKSSNPLAFRHYNPDELVLGKRMEEHLRFAACYWHTFCWNGADMFGVGAFNRPWQQPGEALALAKRKADVAFEFFHKLHVPFYCFHDVDVSPEGASLKEYINNFAQMVDVLAGKQEESGVKLLWGTANCFTNPRYGAGAATNPDPEVFSWAATQVVTAMEATHKLGGENYVLWGGREGYETLLNTDLRQEREQLGRFMQMVVEHKHKIGFQGTLLIEPKPQEPTKHQYDYDAATVYGFLKQFGLEKEIKLNIEANHATLAGHSFHHEIATAIALGLFGSVDANRGDAQLGWDTDQFPNSVEENALVMYEILKAGGFTTGGLNFDAKVRRQSTDKYDLFYGHIGAMDTMALALKIAACMIEDGELDKRIAQRYSGWNSELGQQILKGQMSLADLAKYAQEHNLSPVHQSGRQEQLENLVNHYLFDK</sequence>